<feature type="chain" id="PRO_0000251536" description="Large ribosomal subunit protein uL15">
    <location>
        <begin position="1"/>
        <end position="150"/>
    </location>
</feature>
<feature type="region of interest" description="Disordered" evidence="2">
    <location>
        <begin position="1"/>
        <end position="52"/>
    </location>
</feature>
<feature type="compositionally biased region" description="Basic residues" evidence="2">
    <location>
        <begin position="11"/>
        <end position="31"/>
    </location>
</feature>
<comment type="function">
    <text evidence="1">Binds to the 23S rRNA.</text>
</comment>
<comment type="subunit">
    <text evidence="1">Part of the 50S ribosomal subunit.</text>
</comment>
<comment type="similarity">
    <text evidence="1">Belongs to the universal ribosomal protein uL15 family.</text>
</comment>
<proteinExistence type="inferred from homology"/>
<name>RL15_PARUW</name>
<gene>
    <name evidence="1" type="primary">rplO</name>
    <name type="ordered locus">pc0429</name>
</gene>
<sequence length="150" mass="16760">MITLNTLKDSTRKRKPRKRVGRGIGSKHGKTCGRGEKGAGARSGYKRRLGKEGGQMPLFMKLPLRGFSNAQFRRQFDVINLDQIEAVFKDGETVDELSLRERGFISGRTHGIKLLGNGDLTKKVKIHVHAISESAREKLTQAKVSFEIVK</sequence>
<keyword id="KW-1185">Reference proteome</keyword>
<keyword id="KW-0687">Ribonucleoprotein</keyword>
<keyword id="KW-0689">Ribosomal protein</keyword>
<keyword id="KW-0694">RNA-binding</keyword>
<keyword id="KW-0699">rRNA-binding</keyword>
<organism>
    <name type="scientific">Protochlamydia amoebophila (strain UWE25)</name>
    <dbReference type="NCBI Taxonomy" id="264201"/>
    <lineage>
        <taxon>Bacteria</taxon>
        <taxon>Pseudomonadati</taxon>
        <taxon>Chlamydiota</taxon>
        <taxon>Chlamydiia</taxon>
        <taxon>Parachlamydiales</taxon>
        <taxon>Parachlamydiaceae</taxon>
        <taxon>Candidatus Protochlamydia</taxon>
    </lineage>
</organism>
<evidence type="ECO:0000255" key="1">
    <source>
        <dbReference type="HAMAP-Rule" id="MF_01341"/>
    </source>
</evidence>
<evidence type="ECO:0000256" key="2">
    <source>
        <dbReference type="SAM" id="MobiDB-lite"/>
    </source>
</evidence>
<evidence type="ECO:0000305" key="3"/>
<dbReference type="EMBL" id="BX908798">
    <property type="protein sequence ID" value="CAF23153.1"/>
    <property type="molecule type" value="Genomic_DNA"/>
</dbReference>
<dbReference type="RefSeq" id="WP_011174979.1">
    <property type="nucleotide sequence ID" value="NC_005861.2"/>
</dbReference>
<dbReference type="SMR" id="Q6ME46"/>
<dbReference type="STRING" id="264201.pc0429"/>
<dbReference type="KEGG" id="pcu:PC_RS02095"/>
<dbReference type="eggNOG" id="COG0200">
    <property type="taxonomic scope" value="Bacteria"/>
</dbReference>
<dbReference type="HOGENOM" id="CLU_055188_4_2_0"/>
<dbReference type="OrthoDB" id="9810293at2"/>
<dbReference type="Proteomes" id="UP000000529">
    <property type="component" value="Chromosome"/>
</dbReference>
<dbReference type="GO" id="GO:0015934">
    <property type="term" value="C:large ribosomal subunit"/>
    <property type="evidence" value="ECO:0007669"/>
    <property type="project" value="InterPro"/>
</dbReference>
<dbReference type="GO" id="GO:0019843">
    <property type="term" value="F:rRNA binding"/>
    <property type="evidence" value="ECO:0007669"/>
    <property type="project" value="UniProtKB-UniRule"/>
</dbReference>
<dbReference type="GO" id="GO:0003735">
    <property type="term" value="F:structural constituent of ribosome"/>
    <property type="evidence" value="ECO:0007669"/>
    <property type="project" value="InterPro"/>
</dbReference>
<dbReference type="GO" id="GO:0006412">
    <property type="term" value="P:translation"/>
    <property type="evidence" value="ECO:0007669"/>
    <property type="project" value="UniProtKB-UniRule"/>
</dbReference>
<dbReference type="Gene3D" id="3.100.10.10">
    <property type="match status" value="1"/>
</dbReference>
<dbReference type="HAMAP" id="MF_01341">
    <property type="entry name" value="Ribosomal_uL15"/>
    <property type="match status" value="1"/>
</dbReference>
<dbReference type="InterPro" id="IPR030878">
    <property type="entry name" value="Ribosomal_uL15"/>
</dbReference>
<dbReference type="InterPro" id="IPR021131">
    <property type="entry name" value="Ribosomal_uL15/eL18"/>
</dbReference>
<dbReference type="InterPro" id="IPR036227">
    <property type="entry name" value="Ribosomal_uL15/eL18_sf"/>
</dbReference>
<dbReference type="InterPro" id="IPR005749">
    <property type="entry name" value="Ribosomal_uL15_bac-type"/>
</dbReference>
<dbReference type="NCBIfam" id="TIGR01071">
    <property type="entry name" value="rplO_bact"/>
    <property type="match status" value="1"/>
</dbReference>
<dbReference type="PANTHER" id="PTHR12934">
    <property type="entry name" value="50S RIBOSOMAL PROTEIN L15"/>
    <property type="match status" value="1"/>
</dbReference>
<dbReference type="PANTHER" id="PTHR12934:SF11">
    <property type="entry name" value="LARGE RIBOSOMAL SUBUNIT PROTEIN UL15M"/>
    <property type="match status" value="1"/>
</dbReference>
<dbReference type="Pfam" id="PF00828">
    <property type="entry name" value="Ribosomal_L27A"/>
    <property type="match status" value="1"/>
</dbReference>
<dbReference type="SUPFAM" id="SSF52080">
    <property type="entry name" value="Ribosomal proteins L15p and L18e"/>
    <property type="match status" value="1"/>
</dbReference>
<accession>Q6ME46</accession>
<reference key="1">
    <citation type="journal article" date="2004" name="Science">
        <title>Illuminating the evolutionary history of chlamydiae.</title>
        <authorList>
            <person name="Horn M."/>
            <person name="Collingro A."/>
            <person name="Schmitz-Esser S."/>
            <person name="Beier C.L."/>
            <person name="Purkhold U."/>
            <person name="Fartmann B."/>
            <person name="Brandt P."/>
            <person name="Nyakatura G.J."/>
            <person name="Droege M."/>
            <person name="Frishman D."/>
            <person name="Rattei T."/>
            <person name="Mewes H.-W."/>
            <person name="Wagner M."/>
        </authorList>
    </citation>
    <scope>NUCLEOTIDE SEQUENCE [LARGE SCALE GENOMIC DNA]</scope>
    <source>
        <strain>UWE25</strain>
    </source>
</reference>
<protein>
    <recommendedName>
        <fullName evidence="1">Large ribosomal subunit protein uL15</fullName>
    </recommendedName>
    <alternativeName>
        <fullName evidence="3">50S ribosomal protein L15</fullName>
    </alternativeName>
</protein>